<keyword id="KW-0238">DNA-binding</keyword>
<keyword id="KW-0804">Transcription</keyword>
<keyword id="KW-0805">Transcription regulation</keyword>
<feature type="chain" id="PRO_1000127272" description="HTH-type transcriptional regulator ArgP">
    <location>
        <begin position="1"/>
        <end position="297"/>
    </location>
</feature>
<feature type="domain" description="HTH lysR-type" evidence="1">
    <location>
        <begin position="4"/>
        <end position="60"/>
    </location>
</feature>
<feature type="DNA-binding region" description="H-T-H motif" evidence="1">
    <location>
        <begin position="21"/>
        <end position="40"/>
    </location>
</feature>
<organism>
    <name type="scientific">Escherichia coli (strain SE11)</name>
    <dbReference type="NCBI Taxonomy" id="409438"/>
    <lineage>
        <taxon>Bacteria</taxon>
        <taxon>Pseudomonadati</taxon>
        <taxon>Pseudomonadota</taxon>
        <taxon>Gammaproteobacteria</taxon>
        <taxon>Enterobacterales</taxon>
        <taxon>Enterobacteriaceae</taxon>
        <taxon>Escherichia</taxon>
    </lineage>
</organism>
<proteinExistence type="inferred from homology"/>
<name>ARGP_ECOSE</name>
<gene>
    <name evidence="1" type="primary">argP</name>
    <name type="synonym">iciA</name>
    <name type="ordered locus">ECSE_3178</name>
</gene>
<accession>B6I748</accession>
<sequence length="297" mass="33472">MKRPDYRTLQALDAVIRERGFERAAQKLCITQSAVSQRIKQLENMFGQPLLVRTVPPRPTEQGQKLLALLRQVELLEEEWLGDEQTGSTPLLLSLAVNADSLATWLLPALAPVLADSPIRLNLQVEDETRTQERLRRGEVVGAVSIQHQALPSCLVDKLGALDYLFVSSKPFAEKYFPNGVTRSALLKAPVVAFDHLDDMHQAFLQQNFDLPPGSVPCHIVNSSEAFVQLARQGTTCCMIPHLQIEKELASGELIDLTPGLFQRRMLYWHRFAPESRMMRKVTDALLDYGHKVLRQD</sequence>
<comment type="function">
    <text evidence="1">Controls the transcription of genes involved in arginine and lysine metabolism.</text>
</comment>
<comment type="subunit">
    <text evidence="1">Homodimer.</text>
</comment>
<comment type="similarity">
    <text evidence="2">Belongs to the LysR transcriptional regulatory family.</text>
</comment>
<dbReference type="EMBL" id="AP009240">
    <property type="protein sequence ID" value="BAG78702.1"/>
    <property type="molecule type" value="Genomic_DNA"/>
</dbReference>
<dbReference type="RefSeq" id="WP_000828351.1">
    <property type="nucleotide sequence ID" value="NC_011415.1"/>
</dbReference>
<dbReference type="SMR" id="B6I748"/>
<dbReference type="GeneID" id="93779084"/>
<dbReference type="KEGG" id="ecy:ECSE_3178"/>
<dbReference type="HOGENOM" id="CLU_063829_0_0_6"/>
<dbReference type="Proteomes" id="UP000008199">
    <property type="component" value="Chromosome"/>
</dbReference>
<dbReference type="GO" id="GO:0003677">
    <property type="term" value="F:DNA binding"/>
    <property type="evidence" value="ECO:0007669"/>
    <property type="project" value="UniProtKB-UniRule"/>
</dbReference>
<dbReference type="GO" id="GO:0003700">
    <property type="term" value="F:DNA-binding transcription factor activity"/>
    <property type="evidence" value="ECO:0007669"/>
    <property type="project" value="UniProtKB-UniRule"/>
</dbReference>
<dbReference type="CDD" id="cd08428">
    <property type="entry name" value="PBP2_IciA_ArgP"/>
    <property type="match status" value="1"/>
</dbReference>
<dbReference type="FunFam" id="1.10.10.10:FF:000061">
    <property type="entry name" value="HTH-type transcriptional regulator ArgP"/>
    <property type="match status" value="1"/>
</dbReference>
<dbReference type="FunFam" id="3.40.190.290:FF:000002">
    <property type="entry name" value="HTH-type transcriptional regulator ArgP"/>
    <property type="match status" value="1"/>
</dbReference>
<dbReference type="Gene3D" id="3.40.190.290">
    <property type="match status" value="1"/>
</dbReference>
<dbReference type="Gene3D" id="1.10.10.10">
    <property type="entry name" value="Winged helix-like DNA-binding domain superfamily/Winged helix DNA-binding domain"/>
    <property type="match status" value="1"/>
</dbReference>
<dbReference type="HAMAP" id="MF_00513">
    <property type="entry name" value="HTH_type_ArgP"/>
    <property type="match status" value="1"/>
</dbReference>
<dbReference type="InterPro" id="IPR017685">
    <property type="entry name" value="ArgP"/>
</dbReference>
<dbReference type="InterPro" id="IPR023490">
    <property type="entry name" value="ArgP_gammaproteobact"/>
</dbReference>
<dbReference type="InterPro" id="IPR050176">
    <property type="entry name" value="LTTR"/>
</dbReference>
<dbReference type="InterPro" id="IPR005119">
    <property type="entry name" value="LysR_subst-bd"/>
</dbReference>
<dbReference type="InterPro" id="IPR000847">
    <property type="entry name" value="Tscrpt_reg_HTH_LysR"/>
</dbReference>
<dbReference type="InterPro" id="IPR036388">
    <property type="entry name" value="WH-like_DNA-bd_sf"/>
</dbReference>
<dbReference type="InterPro" id="IPR036390">
    <property type="entry name" value="WH_DNA-bd_sf"/>
</dbReference>
<dbReference type="NCBIfam" id="TIGR03298">
    <property type="entry name" value="argP"/>
    <property type="match status" value="1"/>
</dbReference>
<dbReference type="NCBIfam" id="NF002964">
    <property type="entry name" value="PRK03635.1"/>
    <property type="match status" value="1"/>
</dbReference>
<dbReference type="NCBIfam" id="NF009888">
    <property type="entry name" value="PRK13348.1"/>
    <property type="match status" value="1"/>
</dbReference>
<dbReference type="PANTHER" id="PTHR30579:SF2">
    <property type="entry name" value="HTH-TYPE TRANSCRIPTIONAL REGULATOR ARGP"/>
    <property type="match status" value="1"/>
</dbReference>
<dbReference type="PANTHER" id="PTHR30579">
    <property type="entry name" value="TRANSCRIPTIONAL REGULATOR"/>
    <property type="match status" value="1"/>
</dbReference>
<dbReference type="Pfam" id="PF00126">
    <property type="entry name" value="HTH_1"/>
    <property type="match status" value="1"/>
</dbReference>
<dbReference type="Pfam" id="PF03466">
    <property type="entry name" value="LysR_substrate"/>
    <property type="match status" value="1"/>
</dbReference>
<dbReference type="PRINTS" id="PR00039">
    <property type="entry name" value="HTHLYSR"/>
</dbReference>
<dbReference type="SUPFAM" id="SSF53850">
    <property type="entry name" value="Periplasmic binding protein-like II"/>
    <property type="match status" value="1"/>
</dbReference>
<dbReference type="SUPFAM" id="SSF46785">
    <property type="entry name" value="Winged helix' DNA-binding domain"/>
    <property type="match status" value="1"/>
</dbReference>
<dbReference type="PROSITE" id="PS50931">
    <property type="entry name" value="HTH_LYSR"/>
    <property type="match status" value="1"/>
</dbReference>
<evidence type="ECO:0000255" key="1">
    <source>
        <dbReference type="HAMAP-Rule" id="MF_00513"/>
    </source>
</evidence>
<evidence type="ECO:0000305" key="2"/>
<protein>
    <recommendedName>
        <fullName evidence="1">HTH-type transcriptional regulator ArgP</fullName>
    </recommendedName>
</protein>
<reference key="1">
    <citation type="journal article" date="2008" name="DNA Res.">
        <title>Complete genome sequence and comparative analysis of the wild-type commensal Escherichia coli strain SE11 isolated from a healthy adult.</title>
        <authorList>
            <person name="Oshima K."/>
            <person name="Toh H."/>
            <person name="Ogura Y."/>
            <person name="Sasamoto H."/>
            <person name="Morita H."/>
            <person name="Park S.-H."/>
            <person name="Ooka T."/>
            <person name="Iyoda S."/>
            <person name="Taylor T.D."/>
            <person name="Hayashi T."/>
            <person name="Itoh K."/>
            <person name="Hattori M."/>
        </authorList>
    </citation>
    <scope>NUCLEOTIDE SEQUENCE [LARGE SCALE GENOMIC DNA]</scope>
    <source>
        <strain>SE11</strain>
    </source>
</reference>